<gene>
    <name type="ordered locus">YHR045W</name>
</gene>
<protein>
    <recommendedName>
        <fullName>Putative uncharacterized protein YHR045W</fullName>
    </recommendedName>
</protein>
<organism>
    <name type="scientific">Saccharomyces cerevisiae (strain ATCC 204508 / S288c)</name>
    <name type="common">Baker's yeast</name>
    <dbReference type="NCBI Taxonomy" id="559292"/>
    <lineage>
        <taxon>Eukaryota</taxon>
        <taxon>Fungi</taxon>
        <taxon>Dikarya</taxon>
        <taxon>Ascomycota</taxon>
        <taxon>Saccharomycotina</taxon>
        <taxon>Saccharomycetes</taxon>
        <taxon>Saccharomycetales</taxon>
        <taxon>Saccharomycetaceae</taxon>
        <taxon>Saccharomyces</taxon>
    </lineage>
</organism>
<comment type="subcellular location">
    <subcellularLocation>
        <location evidence="2">Membrane</location>
        <topology evidence="2">Multi-pass membrane protein</topology>
    </subcellularLocation>
</comment>
<reference key="1">
    <citation type="journal article" date="1994" name="Science">
        <title>Complete nucleotide sequence of Saccharomyces cerevisiae chromosome VIII.</title>
        <authorList>
            <person name="Johnston M."/>
            <person name="Andrews S."/>
            <person name="Brinkman R."/>
            <person name="Cooper J."/>
            <person name="Ding H."/>
            <person name="Dover J."/>
            <person name="Du Z."/>
            <person name="Favello A."/>
            <person name="Fulton L."/>
            <person name="Gattung S."/>
            <person name="Geisel C."/>
            <person name="Kirsten J."/>
            <person name="Kucaba T."/>
            <person name="Hillier L.W."/>
            <person name="Jier M."/>
            <person name="Johnston L."/>
            <person name="Langston Y."/>
            <person name="Latreille P."/>
            <person name="Louis E.J."/>
            <person name="Macri C."/>
            <person name="Mardis E."/>
            <person name="Menezes S."/>
            <person name="Mouser L."/>
            <person name="Nhan M."/>
            <person name="Rifkin L."/>
            <person name="Riles L."/>
            <person name="St Peter H."/>
            <person name="Trevaskis E."/>
            <person name="Vaughan K."/>
            <person name="Vignati D."/>
            <person name="Wilcox L."/>
            <person name="Wohldman P."/>
            <person name="Waterston R."/>
            <person name="Wilson R."/>
            <person name="Vaudin M."/>
        </authorList>
    </citation>
    <scope>NUCLEOTIDE SEQUENCE [LARGE SCALE GENOMIC DNA]</scope>
    <source>
        <strain>ATCC 204508 / S288c</strain>
    </source>
</reference>
<reference key="2">
    <citation type="journal article" date="2014" name="G3 (Bethesda)">
        <title>The reference genome sequence of Saccharomyces cerevisiae: Then and now.</title>
        <authorList>
            <person name="Engel S.R."/>
            <person name="Dietrich F.S."/>
            <person name="Fisk D.G."/>
            <person name="Binkley G."/>
            <person name="Balakrishnan R."/>
            <person name="Costanzo M.C."/>
            <person name="Dwight S.S."/>
            <person name="Hitz B.C."/>
            <person name="Karra K."/>
            <person name="Nash R.S."/>
            <person name="Weng S."/>
            <person name="Wong E.D."/>
            <person name="Lloyd P."/>
            <person name="Skrzypek M.S."/>
            <person name="Miyasato S.R."/>
            <person name="Simison M."/>
            <person name="Cherry J.M."/>
        </authorList>
    </citation>
    <scope>GENOME REANNOTATION</scope>
    <source>
        <strain>ATCC 204508 / S288c</strain>
    </source>
</reference>
<reference key="3">
    <citation type="journal article" date="2007" name="Genome Res.">
        <title>Approaching a complete repository of sequence-verified protein-encoding clones for Saccharomyces cerevisiae.</title>
        <authorList>
            <person name="Hu Y."/>
            <person name="Rolfs A."/>
            <person name="Bhullar B."/>
            <person name="Murthy T.V.S."/>
            <person name="Zhu C."/>
            <person name="Berger M.F."/>
            <person name="Camargo A.A."/>
            <person name="Kelley F."/>
            <person name="McCarron S."/>
            <person name="Jepson D."/>
            <person name="Richardson A."/>
            <person name="Raphael J."/>
            <person name="Moreira D."/>
            <person name="Taycher E."/>
            <person name="Zuo D."/>
            <person name="Mohr S."/>
            <person name="Kane M.F."/>
            <person name="Williamson J."/>
            <person name="Simpson A.J.G."/>
            <person name="Bulyk M.L."/>
            <person name="Harlow E."/>
            <person name="Marsischky G."/>
            <person name="Kolodner R.D."/>
            <person name="LaBaer J."/>
        </authorList>
    </citation>
    <scope>NUCLEOTIDE SEQUENCE [GENOMIC DNA]</scope>
    <source>
        <strain>ATCC 204508 / S288c</strain>
    </source>
</reference>
<feature type="chain" id="PRO_0000202893" description="Putative uncharacterized protein YHR045W">
    <location>
        <begin position="1"/>
        <end position="560"/>
    </location>
</feature>
<feature type="transmembrane region" description="Helical" evidence="1">
    <location>
        <begin position="9"/>
        <end position="29"/>
    </location>
</feature>
<feature type="transmembrane region" description="Helical" evidence="1">
    <location>
        <begin position="61"/>
        <end position="81"/>
    </location>
</feature>
<feature type="transmembrane region" description="Helical" evidence="1">
    <location>
        <begin position="136"/>
        <end position="156"/>
    </location>
</feature>
<feature type="transmembrane region" description="Helical" evidence="1">
    <location>
        <begin position="305"/>
        <end position="325"/>
    </location>
</feature>
<feature type="transmembrane region" description="Helical" evidence="1">
    <location>
        <begin position="442"/>
        <end position="462"/>
    </location>
</feature>
<keyword id="KW-0472">Membrane</keyword>
<keyword id="KW-1185">Reference proteome</keyword>
<keyword id="KW-0812">Transmembrane</keyword>
<keyword id="KW-1133">Transmembrane helix</keyword>
<accession>P38775</accession>
<accession>D3DKZ3</accession>
<dbReference type="EMBL" id="U00062">
    <property type="protein sequence ID" value="AAB68903.1"/>
    <property type="molecule type" value="Genomic_DNA"/>
</dbReference>
<dbReference type="EMBL" id="AY558098">
    <property type="protein sequence ID" value="AAS56424.1"/>
    <property type="molecule type" value="Genomic_DNA"/>
</dbReference>
<dbReference type="EMBL" id="BK006934">
    <property type="protein sequence ID" value="DAA06737.1"/>
    <property type="molecule type" value="Genomic_DNA"/>
</dbReference>
<dbReference type="PIR" id="S46734">
    <property type="entry name" value="S46734"/>
</dbReference>
<dbReference type="BioGRID" id="36477">
    <property type="interactions" value="169"/>
</dbReference>
<dbReference type="DIP" id="DIP-5587N"/>
<dbReference type="FunCoup" id="P38775">
    <property type="interactions" value="51"/>
</dbReference>
<dbReference type="IntAct" id="P38775">
    <property type="interactions" value="1"/>
</dbReference>
<dbReference type="MINT" id="P38775"/>
<dbReference type="STRING" id="4932.YHR045W"/>
<dbReference type="iPTMnet" id="P38775"/>
<dbReference type="PaxDb" id="4932-YHR045W"/>
<dbReference type="PeptideAtlas" id="P38775"/>
<dbReference type="EnsemblFungi" id="YHR045W_mRNA">
    <property type="protein sequence ID" value="YHR045W"/>
    <property type="gene ID" value="YHR045W"/>
</dbReference>
<dbReference type="KEGG" id="sce:YHR045W"/>
<dbReference type="AGR" id="SGD:S000001087"/>
<dbReference type="SGD" id="S000001087">
    <property type="gene designation" value="YHR045W"/>
</dbReference>
<dbReference type="VEuPathDB" id="FungiDB:YHR045W"/>
<dbReference type="eggNOG" id="ENOG502QWA5">
    <property type="taxonomic scope" value="Eukaryota"/>
</dbReference>
<dbReference type="HOGENOM" id="CLU_042082_0_0_1"/>
<dbReference type="InParanoid" id="P38775"/>
<dbReference type="OMA" id="ADWNIYT"/>
<dbReference type="OrthoDB" id="4138492at2759"/>
<dbReference type="BioCyc" id="YEAST:G3O-31101-MONOMER"/>
<dbReference type="BioGRID-ORCS" id="856441">
    <property type="hits" value="3 hits in 10 CRISPR screens"/>
</dbReference>
<dbReference type="PRO" id="PR:P38775"/>
<dbReference type="Proteomes" id="UP000002311">
    <property type="component" value="Chromosome VIII"/>
</dbReference>
<dbReference type="RNAct" id="P38775">
    <property type="molecule type" value="protein"/>
</dbReference>
<dbReference type="GO" id="GO:0005783">
    <property type="term" value="C:endoplasmic reticulum"/>
    <property type="evidence" value="ECO:0007005"/>
    <property type="project" value="SGD"/>
</dbReference>
<dbReference type="GO" id="GO:0016020">
    <property type="term" value="C:membrane"/>
    <property type="evidence" value="ECO:0007669"/>
    <property type="project" value="UniProtKB-SubCell"/>
</dbReference>
<evidence type="ECO:0000255" key="1"/>
<evidence type="ECO:0000305" key="2"/>
<proteinExistence type="predicted"/>
<sequence>MNWSFLLQLVITILLIVLGANWLLSSFLLDFKRDLTGVALSQQSSISSVRKENETAYYRSILVPTGFPLTTGLGLSLKYKIRNGNFGDVWNAIMEVSKGKNIIKFTGREKSYSLSELNGMAKRIFPKLSNKNFKNIGIANSIATVEGFTLSLASMMTSIRTGSIPHFLPAVPRQRLEDVDVLIIDSWKSFKMLNGSEDWYKLIVVCDDPIESLQFDANCDVITWKELIDGFTKDTEYQYTPPDDNSDDKKLFAYVTSPWNGTNSFNQICLVSNIAEFIKGFPLGNELNSNEYLTISTKLANSSASLQIWGKLFAVLLHGGSASFINPTTIDCESLQETTLLFTETKDVVKLIDSNSRSGLLNKIYLSWATNLLSEGIFTKIARIEPHSLEKLRCVYLADNVKDAEVISTFPEKIPQLKKTNRRITPSTEQLNKIRAQLGSRVVLELYCPYAIMGPVAHTNFYDYRVFGKSVDDNVVCYGTLSTTLEGKMVETETNPHLNIEKKQGMLCIRGFSIGKPVESDRLEKALHLAERFGGGEGWMPLVGVFGLFGQDGCLYIYNQ</sequence>
<name>YHK5_YEAST</name>